<reference key="1">
    <citation type="journal article" date="1997" name="Proc. Natl. Acad. Sci. U.S.A.">
        <title>Complete nucleotide sequence of the chloroplast genome from the green alga Chlorella vulgaris: the existence of genes possibly involved in chloroplast division.</title>
        <authorList>
            <person name="Wakasugi T."/>
            <person name="Nagai T."/>
            <person name="Kapoor M."/>
            <person name="Sugita M."/>
            <person name="Ito M."/>
            <person name="Ito S."/>
            <person name="Tsudzuki J."/>
            <person name="Nakashima K."/>
            <person name="Tsudzuki T."/>
            <person name="Suzuki Y."/>
            <person name="Hamada A."/>
            <person name="Ohta T."/>
            <person name="Inamura A."/>
            <person name="Yoshinaga K."/>
            <person name="Sugiura M."/>
        </authorList>
    </citation>
    <scope>NUCLEOTIDE SEQUENCE [LARGE SCALE GENOMIC DNA]</scope>
    <source>
        <strain>IAM C-27 / Tamiya</strain>
    </source>
</reference>
<keyword id="KW-0150">Chloroplast</keyword>
<keyword id="KW-0934">Plastid</keyword>
<keyword id="KW-0687">Ribonucleoprotein</keyword>
<keyword id="KW-0689">Ribosomal protein</keyword>
<name>RR9_CHLVU</name>
<geneLocation type="chloroplast"/>
<proteinExistence type="inferred from homology"/>
<evidence type="ECO:0000305" key="1"/>
<dbReference type="EMBL" id="AB001684">
    <property type="protein sequence ID" value="BAA57995.1"/>
    <property type="molecule type" value="Genomic_DNA"/>
</dbReference>
<dbReference type="PIR" id="T07347">
    <property type="entry name" value="T07347"/>
</dbReference>
<dbReference type="RefSeq" id="NP_045919.1">
    <property type="nucleotide sequence ID" value="NC_001865.1"/>
</dbReference>
<dbReference type="SMR" id="P56358"/>
<dbReference type="GeneID" id="809206"/>
<dbReference type="GO" id="GO:0009507">
    <property type="term" value="C:chloroplast"/>
    <property type="evidence" value="ECO:0007669"/>
    <property type="project" value="UniProtKB-SubCell"/>
</dbReference>
<dbReference type="GO" id="GO:0015935">
    <property type="term" value="C:small ribosomal subunit"/>
    <property type="evidence" value="ECO:0007669"/>
    <property type="project" value="TreeGrafter"/>
</dbReference>
<dbReference type="GO" id="GO:0003723">
    <property type="term" value="F:RNA binding"/>
    <property type="evidence" value="ECO:0007669"/>
    <property type="project" value="TreeGrafter"/>
</dbReference>
<dbReference type="GO" id="GO:0003735">
    <property type="term" value="F:structural constituent of ribosome"/>
    <property type="evidence" value="ECO:0007669"/>
    <property type="project" value="InterPro"/>
</dbReference>
<dbReference type="GO" id="GO:0006412">
    <property type="term" value="P:translation"/>
    <property type="evidence" value="ECO:0007669"/>
    <property type="project" value="UniProtKB-UniRule"/>
</dbReference>
<dbReference type="FunFam" id="3.30.230.10:FF:000001">
    <property type="entry name" value="30S ribosomal protein S9"/>
    <property type="match status" value="1"/>
</dbReference>
<dbReference type="Gene3D" id="3.30.230.10">
    <property type="match status" value="1"/>
</dbReference>
<dbReference type="HAMAP" id="MF_00532_B">
    <property type="entry name" value="Ribosomal_uS9_B"/>
    <property type="match status" value="1"/>
</dbReference>
<dbReference type="InterPro" id="IPR020568">
    <property type="entry name" value="Ribosomal_Su5_D2-typ_SF"/>
</dbReference>
<dbReference type="InterPro" id="IPR000754">
    <property type="entry name" value="Ribosomal_uS9"/>
</dbReference>
<dbReference type="InterPro" id="IPR023035">
    <property type="entry name" value="Ribosomal_uS9_bac/plastid"/>
</dbReference>
<dbReference type="InterPro" id="IPR020574">
    <property type="entry name" value="Ribosomal_uS9_CS"/>
</dbReference>
<dbReference type="InterPro" id="IPR014721">
    <property type="entry name" value="Ribsml_uS5_D2-typ_fold_subgr"/>
</dbReference>
<dbReference type="NCBIfam" id="NF001099">
    <property type="entry name" value="PRK00132.1"/>
    <property type="match status" value="1"/>
</dbReference>
<dbReference type="PANTHER" id="PTHR21569">
    <property type="entry name" value="RIBOSOMAL PROTEIN S9"/>
    <property type="match status" value="1"/>
</dbReference>
<dbReference type="PANTHER" id="PTHR21569:SF1">
    <property type="entry name" value="SMALL RIBOSOMAL SUBUNIT PROTEIN US9M"/>
    <property type="match status" value="1"/>
</dbReference>
<dbReference type="Pfam" id="PF00380">
    <property type="entry name" value="Ribosomal_S9"/>
    <property type="match status" value="1"/>
</dbReference>
<dbReference type="SUPFAM" id="SSF54211">
    <property type="entry name" value="Ribosomal protein S5 domain 2-like"/>
    <property type="match status" value="1"/>
</dbReference>
<dbReference type="PROSITE" id="PS00360">
    <property type="entry name" value="RIBOSOMAL_S9"/>
    <property type="match status" value="1"/>
</dbReference>
<comment type="subcellular location">
    <subcellularLocation>
        <location>Plastid</location>
        <location>Chloroplast</location>
    </subcellularLocation>
</comment>
<comment type="similarity">
    <text evidence="1">Belongs to the universal ribosomal protein uS9 family.</text>
</comment>
<gene>
    <name type="primary">rps9</name>
</gene>
<protein>
    <recommendedName>
        <fullName evidence="1">Small ribosomal subunit protein uS9c</fullName>
    </recommendedName>
    <alternativeName>
        <fullName>30S ribosomal protein S9, chloroplastic</fullName>
    </alternativeName>
</protein>
<organism>
    <name type="scientific">Chlorella vulgaris</name>
    <name type="common">Green alga</name>
    <dbReference type="NCBI Taxonomy" id="3077"/>
    <lineage>
        <taxon>Eukaryota</taxon>
        <taxon>Viridiplantae</taxon>
        <taxon>Chlorophyta</taxon>
        <taxon>core chlorophytes</taxon>
        <taxon>Trebouxiophyceae</taxon>
        <taxon>Chlorellales</taxon>
        <taxon>Chlorellaceae</taxon>
        <taxon>Chlorella clade</taxon>
        <taxon>Chlorella</taxon>
    </lineage>
</organism>
<sequence length="137" mass="15425">MIKITKTISQSTQSGGRKTAKARVQLLPGTGTKVMVNGKQASDYFQNNAVYLQNMFTPRDLVKTETKYDVHILVEGGGLSAQAQAVKLALSKAFVDFFPEYRKVFKKPGLLTRDARIKERRKYGLKKARKAPQFSKR</sequence>
<accession>P56358</accession>
<feature type="chain" id="PRO_0000111451" description="Small ribosomal subunit protein uS9c">
    <location>
        <begin position="1"/>
        <end position="137"/>
    </location>
</feature>